<organism>
    <name type="scientific">Pyrococcus abyssi (strain GE5 / Orsay)</name>
    <dbReference type="NCBI Taxonomy" id="272844"/>
    <lineage>
        <taxon>Archaea</taxon>
        <taxon>Methanobacteriati</taxon>
        <taxon>Methanobacteriota</taxon>
        <taxon>Thermococci</taxon>
        <taxon>Thermococcales</taxon>
        <taxon>Thermococcaceae</taxon>
        <taxon>Pyrococcus</taxon>
    </lineage>
</organism>
<name>Y1270_PYRAB</name>
<comment type="similarity">
    <text evidence="1">Belongs to the UPF0148 family.</text>
</comment>
<sequence length="105" mass="12243">MITDEEIRKVIAPLLLSGAKMLDKHCPKCGSPLFEKDGRVFCPVCEYREKKKREEMKGVEEVLMEKFKDLAFSLPKDVNELMQHLDAMEKLLTIIERYRKLEGRG</sequence>
<evidence type="ECO:0000305" key="1"/>
<reference key="1">
    <citation type="journal article" date="2003" name="Mol. Microbiol.">
        <title>An integrated analysis of the genome of the hyperthermophilic archaeon Pyrococcus abyssi.</title>
        <authorList>
            <person name="Cohen G.N."/>
            <person name="Barbe V."/>
            <person name="Flament D."/>
            <person name="Galperin M."/>
            <person name="Heilig R."/>
            <person name="Lecompte O."/>
            <person name="Poch O."/>
            <person name="Prieur D."/>
            <person name="Querellou J."/>
            <person name="Ripp R."/>
            <person name="Thierry J.-C."/>
            <person name="Van der Oost J."/>
            <person name="Weissenbach J."/>
            <person name="Zivanovic Y."/>
            <person name="Forterre P."/>
        </authorList>
    </citation>
    <scope>NUCLEOTIDE SEQUENCE [LARGE SCALE GENOMIC DNA]</scope>
    <source>
        <strain>GE5 / Orsay</strain>
    </source>
</reference>
<reference key="2">
    <citation type="journal article" date="2012" name="Curr. Microbiol.">
        <title>Re-annotation of two hyperthermophilic archaea Pyrococcus abyssi GE5 and Pyrococcus furiosus DSM 3638.</title>
        <authorList>
            <person name="Gao J."/>
            <person name="Wang J."/>
        </authorList>
    </citation>
    <scope>GENOME REANNOTATION</scope>
    <source>
        <strain>GE5 / Orsay</strain>
    </source>
</reference>
<gene>
    <name type="ordered locus">PYRAB12700</name>
    <name type="ORF">PAB1540</name>
</gene>
<accession>Q9UZ84</accession>
<accession>G8ZKR5</accession>
<proteinExistence type="inferred from homology"/>
<feature type="chain" id="PRO_0000159858" description="UPF0148 protein PYRAB12700">
    <location>
        <begin position="1"/>
        <end position="105"/>
    </location>
</feature>
<protein>
    <recommendedName>
        <fullName>UPF0148 protein PYRAB12700</fullName>
    </recommendedName>
</protein>
<dbReference type="EMBL" id="AJ248287">
    <property type="protein sequence ID" value="CAB50175.1"/>
    <property type="molecule type" value="Genomic_DNA"/>
</dbReference>
<dbReference type="EMBL" id="HE613800">
    <property type="protein sequence ID" value="CCE70708.1"/>
    <property type="molecule type" value="Genomic_DNA"/>
</dbReference>
<dbReference type="PIR" id="B75035">
    <property type="entry name" value="B75035"/>
</dbReference>
<dbReference type="RefSeq" id="WP_010868383.1">
    <property type="nucleotide sequence ID" value="NC_000868.1"/>
</dbReference>
<dbReference type="SMR" id="Q9UZ84"/>
<dbReference type="STRING" id="272844.PAB1540"/>
<dbReference type="KEGG" id="pab:PAB1540"/>
<dbReference type="PATRIC" id="fig|272844.11.peg.1351"/>
<dbReference type="eggNOG" id="arCOG00578">
    <property type="taxonomic scope" value="Archaea"/>
</dbReference>
<dbReference type="HOGENOM" id="CLU_142653_2_0_2"/>
<dbReference type="OrthoDB" id="26305at2157"/>
<dbReference type="PhylomeDB" id="Q9UZ84"/>
<dbReference type="Proteomes" id="UP000000810">
    <property type="component" value="Chromosome"/>
</dbReference>
<dbReference type="Proteomes" id="UP000009139">
    <property type="component" value="Chromosome"/>
</dbReference>
<dbReference type="GO" id="GO:0006351">
    <property type="term" value="P:DNA-templated transcription"/>
    <property type="evidence" value="ECO:0007669"/>
    <property type="project" value="InterPro"/>
</dbReference>
<dbReference type="HAMAP" id="MF_00343">
    <property type="entry name" value="UPF0148"/>
    <property type="match status" value="1"/>
</dbReference>
<dbReference type="InterPro" id="IPR009563">
    <property type="entry name" value="SSSCA1"/>
</dbReference>
<dbReference type="InterPro" id="IPR022954">
    <property type="entry name" value="UPF0148"/>
</dbReference>
<dbReference type="InterPro" id="IPR051888">
    <property type="entry name" value="UPF0148_domain"/>
</dbReference>
<dbReference type="InterPro" id="IPR001529">
    <property type="entry name" value="Zn_ribbon_RPB9"/>
</dbReference>
<dbReference type="NCBIfam" id="NF001645">
    <property type="entry name" value="PRK00420.1-2"/>
    <property type="match status" value="1"/>
</dbReference>
<dbReference type="PANTHER" id="PTHR16537:SF1">
    <property type="entry name" value="PROTEIN ZNRD2"/>
    <property type="match status" value="1"/>
</dbReference>
<dbReference type="PANTHER" id="PTHR16537">
    <property type="entry name" value="SJOEGREN SYNDROME/SCLERODERMA AUTOANTIGEN 1"/>
    <property type="match status" value="1"/>
</dbReference>
<dbReference type="Pfam" id="PF06677">
    <property type="entry name" value="Auto_anti-p27"/>
    <property type="match status" value="1"/>
</dbReference>
<dbReference type="SMART" id="SM00661">
    <property type="entry name" value="RPOL9"/>
    <property type="match status" value="1"/>
</dbReference>